<dbReference type="EMBL" id="AJ276707">
    <property type="protein sequence ID" value="CAC16790.1"/>
    <property type="molecule type" value="mRNA"/>
</dbReference>
<dbReference type="EMBL" id="AK076111">
    <property type="protein sequence ID" value="BAC36191.1"/>
    <property type="molecule type" value="mRNA"/>
</dbReference>
<dbReference type="EMBL" id="AK156334">
    <property type="protein sequence ID" value="BAE33680.1"/>
    <property type="molecule type" value="mRNA"/>
</dbReference>
<dbReference type="EMBL" id="BC046416">
    <property type="protein sequence ID" value="AAH46416.1"/>
    <property type="molecule type" value="mRNA"/>
</dbReference>
<dbReference type="EMBL" id="BC093504">
    <property type="protein sequence ID" value="AAH93504.1"/>
    <property type="molecule type" value="mRNA"/>
</dbReference>
<dbReference type="CCDS" id="CCDS49949.1">
    <molecule id="Q9ER69-2"/>
</dbReference>
<dbReference type="CCDS" id="CCDS49950.1">
    <molecule id="Q9ER69-1"/>
</dbReference>
<dbReference type="RefSeq" id="NP_001107004.1">
    <molecule id="Q9ER69-2"/>
    <property type="nucleotide sequence ID" value="NM_001113532.1"/>
</dbReference>
<dbReference type="RefSeq" id="NP_780603.1">
    <molecule id="Q9ER69-2"/>
    <property type="nucleotide sequence ID" value="NM_175394.2"/>
</dbReference>
<dbReference type="SMR" id="Q9ER69"/>
<dbReference type="BioGRID" id="208601">
    <property type="interactions" value="4"/>
</dbReference>
<dbReference type="ComplexPortal" id="CPX-1609">
    <property type="entry name" value="WMM N6-adenosine-methyltransferase complex"/>
</dbReference>
<dbReference type="CORUM" id="Q9ER69"/>
<dbReference type="DIP" id="DIP-58948N"/>
<dbReference type="FunCoup" id="Q9ER69">
    <property type="interactions" value="5160"/>
</dbReference>
<dbReference type="IntAct" id="Q9ER69">
    <property type="interactions" value="2"/>
</dbReference>
<dbReference type="STRING" id="10090.ENSMUSP00000124205"/>
<dbReference type="GlyGen" id="Q9ER69">
    <property type="glycosylation" value="2 sites, 1 N-linked glycan (1 site), 1 O-linked glycan (1 site)"/>
</dbReference>
<dbReference type="iPTMnet" id="Q9ER69"/>
<dbReference type="PhosphoSitePlus" id="Q9ER69"/>
<dbReference type="jPOST" id="Q9ER69"/>
<dbReference type="PaxDb" id="10090-ENSMUSP00000007007"/>
<dbReference type="PeptideAtlas" id="Q9ER69"/>
<dbReference type="ProteomicsDB" id="267480">
    <molecule id="Q9ER69-1"/>
</dbReference>
<dbReference type="ProteomicsDB" id="267481">
    <molecule id="Q9ER69-2"/>
</dbReference>
<dbReference type="Pumba" id="Q9ER69"/>
<dbReference type="Antibodypedia" id="2136">
    <property type="antibodies" value="377 antibodies from 32 providers"/>
</dbReference>
<dbReference type="DNASU" id="60532"/>
<dbReference type="Ensembl" id="ENSMUST00000159986.8">
    <molecule id="Q9ER69-2"/>
    <property type="protein sequence ID" value="ENSMUSP00000123961.2"/>
    <property type="gene ID" value="ENSMUSG00000060475.14"/>
</dbReference>
<dbReference type="Ensembl" id="ENSMUST00000160781.8">
    <molecule id="Q9ER69-2"/>
    <property type="protein sequence ID" value="ENSMUSP00000124138.2"/>
    <property type="gene ID" value="ENSMUSG00000060475.14"/>
</dbReference>
<dbReference type="GeneID" id="60532"/>
<dbReference type="KEGG" id="mmu:60532"/>
<dbReference type="UCSC" id="uc008alt.2">
    <molecule id="Q9ER69-2"/>
    <property type="organism name" value="mouse"/>
</dbReference>
<dbReference type="AGR" id="MGI:1926395"/>
<dbReference type="CTD" id="9589"/>
<dbReference type="MGI" id="MGI:1926395">
    <property type="gene designation" value="Wtap"/>
</dbReference>
<dbReference type="VEuPathDB" id="HostDB:ENSMUSG00000060475"/>
<dbReference type="eggNOG" id="KOG2991">
    <property type="taxonomic scope" value="Eukaryota"/>
</dbReference>
<dbReference type="GeneTree" id="ENSGT00390000013931"/>
<dbReference type="HOGENOM" id="CLU_044551_3_0_1"/>
<dbReference type="InParanoid" id="Q9ER69"/>
<dbReference type="OrthoDB" id="3366661at2759"/>
<dbReference type="Reactome" id="R-MMU-72203">
    <property type="pathway name" value="Processing of Capped Intron-Containing Pre-mRNA"/>
</dbReference>
<dbReference type="BioGRID-ORCS" id="60532">
    <property type="hits" value="25 hits in 77 CRISPR screens"/>
</dbReference>
<dbReference type="ChiTaRS" id="Wtap">
    <property type="organism name" value="mouse"/>
</dbReference>
<dbReference type="PRO" id="PR:Q9ER69"/>
<dbReference type="Proteomes" id="UP000000589">
    <property type="component" value="Chromosome 17"/>
</dbReference>
<dbReference type="RNAct" id="Q9ER69">
    <property type="molecule type" value="protein"/>
</dbReference>
<dbReference type="Bgee" id="ENSMUSG00000060475">
    <property type="expression patterns" value="Expressed in ureter smooth muscle and 246 other cell types or tissues"/>
</dbReference>
<dbReference type="ExpressionAtlas" id="Q9ER69">
    <property type="expression patterns" value="baseline and differential"/>
</dbReference>
<dbReference type="GO" id="GO:0005737">
    <property type="term" value="C:cytoplasm"/>
    <property type="evidence" value="ECO:0000314"/>
    <property type="project" value="UniProtKB"/>
</dbReference>
<dbReference type="GO" id="GO:0016607">
    <property type="term" value="C:nuclear speck"/>
    <property type="evidence" value="ECO:0000250"/>
    <property type="project" value="UniProtKB"/>
</dbReference>
<dbReference type="GO" id="GO:0005654">
    <property type="term" value="C:nucleoplasm"/>
    <property type="evidence" value="ECO:0000314"/>
    <property type="project" value="MGI"/>
</dbReference>
<dbReference type="GO" id="GO:0005634">
    <property type="term" value="C:nucleus"/>
    <property type="evidence" value="ECO:0000314"/>
    <property type="project" value="UniProtKB"/>
</dbReference>
<dbReference type="GO" id="GO:0036396">
    <property type="term" value="C:RNA N6-methyladenosine methyltransferase complex"/>
    <property type="evidence" value="ECO:0000314"/>
    <property type="project" value="UniProtKB"/>
</dbReference>
<dbReference type="GO" id="GO:0016556">
    <property type="term" value="P:mRNA modification"/>
    <property type="evidence" value="ECO:0007669"/>
    <property type="project" value="InterPro"/>
</dbReference>
<dbReference type="GO" id="GO:0006397">
    <property type="term" value="P:mRNA processing"/>
    <property type="evidence" value="ECO:0000250"/>
    <property type="project" value="UniProtKB"/>
</dbReference>
<dbReference type="GO" id="GO:0000381">
    <property type="term" value="P:regulation of alternative mRNA splicing, via spliceosome"/>
    <property type="evidence" value="ECO:0000250"/>
    <property type="project" value="UniProtKB"/>
</dbReference>
<dbReference type="GO" id="GO:0008380">
    <property type="term" value="P:RNA splicing"/>
    <property type="evidence" value="ECO:0007669"/>
    <property type="project" value="UniProtKB-KW"/>
</dbReference>
<dbReference type="InterPro" id="IPR033757">
    <property type="entry name" value="WTAP"/>
</dbReference>
<dbReference type="PANTHER" id="PTHR15217:SF1">
    <property type="entry name" value="PRE-MRNA-SPLICING REGULATOR WTAP"/>
    <property type="match status" value="1"/>
</dbReference>
<dbReference type="PANTHER" id="PTHR15217">
    <property type="entry name" value="WILMS' TUMOR 1-ASSOCIATING PROTEIN"/>
    <property type="match status" value="1"/>
</dbReference>
<dbReference type="Pfam" id="PF17098">
    <property type="entry name" value="Wtap"/>
    <property type="match status" value="1"/>
</dbReference>
<keyword id="KW-0007">Acetylation</keyword>
<keyword id="KW-0025">Alternative splicing</keyword>
<keyword id="KW-0131">Cell cycle</keyword>
<keyword id="KW-0963">Cytoplasm</keyword>
<keyword id="KW-0217">Developmental protein</keyword>
<keyword id="KW-0507">mRNA processing</keyword>
<keyword id="KW-0508">mRNA splicing</keyword>
<keyword id="KW-0539">Nucleus</keyword>
<keyword id="KW-0597">Phosphoprotein</keyword>
<keyword id="KW-1185">Reference proteome</keyword>
<sequence>MTNEEPLPKKVRLSETDFKVMARDELILRWKQYEAYVQALEGKYTDLNSNDVTGLRESEEKLKQQQQESARRENILVMRLATKEQEMQECTTQIQYLKQVQQPSVAQLRSTMVDPAINLFFLKMKGELEQTKDKLEQAQNELSAWKFTPDSQTGKKLMAKCRMLIQENQELGRQLSQGRIAQLEAELALQKKYSEELKSSQDELNDFIIQLDEEVEGMQSTILVLQQQLKETRQQLAQYQQQQSQASAPSTSRTTSSEPVDQAEVTSKDCSRLANGPSNGSSSRQRTSGSGFHREGSTPEDDFPSSSGNGNKASNSSEERTGRGGSSYINPLSAGYESVDSPTGSENSLTHHSNDTDSSHDPQEEKAVSGKGNRTVGSRHVQNGLDSSVNVQGAVL</sequence>
<gene>
    <name evidence="7 11" type="primary">Wtap</name>
</gene>
<feature type="chain" id="PRO_0000065984" description="Pre-mRNA-splicing regulator WTAP">
    <location>
        <begin position="1"/>
        <end position="396"/>
    </location>
</feature>
<feature type="region of interest" description="Disordered" evidence="2">
    <location>
        <begin position="240"/>
        <end position="396"/>
    </location>
</feature>
<feature type="compositionally biased region" description="Low complexity" evidence="2">
    <location>
        <begin position="240"/>
        <end position="257"/>
    </location>
</feature>
<feature type="compositionally biased region" description="Low complexity" evidence="2">
    <location>
        <begin position="278"/>
        <end position="291"/>
    </location>
</feature>
<feature type="compositionally biased region" description="Low complexity" evidence="2">
    <location>
        <begin position="305"/>
        <end position="316"/>
    </location>
</feature>
<feature type="compositionally biased region" description="Polar residues" evidence="2">
    <location>
        <begin position="340"/>
        <end position="351"/>
    </location>
</feature>
<feature type="compositionally biased region" description="Basic and acidic residues" evidence="2">
    <location>
        <begin position="352"/>
        <end position="368"/>
    </location>
</feature>
<feature type="compositionally biased region" description="Polar residues" evidence="2">
    <location>
        <begin position="380"/>
        <end position="396"/>
    </location>
</feature>
<feature type="modified residue" description="N-acetylmethionine" evidence="1">
    <location>
        <position position="1"/>
    </location>
</feature>
<feature type="modified residue" description="Phosphoserine" evidence="1">
    <location>
        <position position="14"/>
    </location>
</feature>
<feature type="modified residue" description="Phosphoserine" evidence="12">
    <location>
        <position position="297"/>
    </location>
</feature>
<feature type="modified residue" description="Phosphoserine" evidence="1">
    <location>
        <position position="305"/>
    </location>
</feature>
<feature type="modified residue" description="Phosphoserine" evidence="1">
    <location>
        <position position="306"/>
    </location>
</feature>
<feature type="modified residue" description="Phosphoserine" evidence="12">
    <location>
        <position position="341"/>
    </location>
</feature>
<feature type="modified residue" description="Phosphothreonine" evidence="12">
    <location>
        <position position="350"/>
    </location>
</feature>
<feature type="modified residue" description="Phosphoserine" evidence="1">
    <location>
        <position position="388"/>
    </location>
</feature>
<feature type="splice variant" id="VSP_010280" description="In isoform 2." evidence="8 9">
    <original>S</original>
    <variation>R</variation>
    <location>
        <position position="151"/>
    </location>
</feature>
<feature type="splice variant" id="VSP_010281" description="In isoform 2." evidence="8 9">
    <location>
        <begin position="152"/>
        <end position="396"/>
    </location>
</feature>
<proteinExistence type="evidence at protein level"/>
<name>FL2D_MOUSE</name>
<organism>
    <name type="scientific">Mus musculus</name>
    <name type="common">Mouse</name>
    <dbReference type="NCBI Taxonomy" id="10090"/>
    <lineage>
        <taxon>Eukaryota</taxon>
        <taxon>Metazoa</taxon>
        <taxon>Chordata</taxon>
        <taxon>Craniata</taxon>
        <taxon>Vertebrata</taxon>
        <taxon>Euteleostomi</taxon>
        <taxon>Mammalia</taxon>
        <taxon>Eutheria</taxon>
        <taxon>Euarchontoglires</taxon>
        <taxon>Glires</taxon>
        <taxon>Rodentia</taxon>
        <taxon>Myomorpha</taxon>
        <taxon>Muroidea</taxon>
        <taxon>Muridae</taxon>
        <taxon>Murinae</taxon>
        <taxon>Mus</taxon>
        <taxon>Mus</taxon>
    </lineage>
</organism>
<accession>Q9ER69</accession>
<accession>Q3U120</accession>
<accession>Q566J5</accession>
<protein>
    <recommendedName>
        <fullName evidence="10">Pre-mRNA-splicing regulator WTAP</fullName>
    </recommendedName>
    <alternativeName>
        <fullName evidence="1">Female-lethal(2)D homolog</fullName>
    </alternativeName>
    <alternativeName>
        <fullName evidence="7">WT1-associated protein</fullName>
    </alternativeName>
    <alternativeName>
        <fullName evidence="7">Wilms tumor 1-associating protein</fullName>
    </alternativeName>
</protein>
<evidence type="ECO:0000250" key="1">
    <source>
        <dbReference type="UniProtKB" id="Q15007"/>
    </source>
</evidence>
<evidence type="ECO:0000256" key="2">
    <source>
        <dbReference type="SAM" id="MobiDB-lite"/>
    </source>
</evidence>
<evidence type="ECO:0000269" key="3">
    <source>
    </source>
</evidence>
<evidence type="ECO:0000269" key="4">
    <source>
    </source>
</evidence>
<evidence type="ECO:0000269" key="5">
    <source>
    </source>
</evidence>
<evidence type="ECO:0000269" key="6">
    <source>
    </source>
</evidence>
<evidence type="ECO:0000303" key="7">
    <source>
    </source>
</evidence>
<evidence type="ECO:0000303" key="8">
    <source>
    </source>
</evidence>
<evidence type="ECO:0000303" key="9">
    <source>
    </source>
</evidence>
<evidence type="ECO:0000305" key="10"/>
<evidence type="ECO:0000312" key="11">
    <source>
        <dbReference type="MGI" id="MGI:1926395"/>
    </source>
</evidence>
<evidence type="ECO:0007744" key="12">
    <source>
    </source>
</evidence>
<comment type="function">
    <text evidence="1 5 6">Associated component of the WMM complex, a complex that mediates N6-methyladenosine (m6A) methylation of RNAs, a modification that plays a role in the efficiency of mRNA splicing and RNA processing (PubMed:29535189, PubMed:29547716). Acts as a key regulator of m6A methylation by promoting m6A methylation of mRNAs at the 3'-UTR (PubMed:29547716). Required for accumulation of METTL3 and METTL14 to nuclear speckle (By similarity). Acts as a mRNA splicing regulator (By similarity). Regulates G2/M cell-cycle transition by binding to the 3' UTR of CCNA2, which enhances its stability (By similarity). Impairs WT1 DNA-binding ability and inhibits expression of WT1 target genes (By similarity).</text>
</comment>
<comment type="subunit">
    <text evidence="1 3 5 6">Component of the WMM complex, a N6-methyltransferase complex composed of a catalytic subcomplex, named MAC, and of an associated subcomplex, named MACOM (PubMed:29535189, PubMed:29547716). The MAC subcomplex is composed of METTL3 and METTL14 (PubMed:29535189, PubMed:29547716). The MACOM subcomplex is composed of WTAP, ZC3H13, CBLL1/HAKAI, VIRMA, and, in some cases of RBM15 (RBM15 or RBM15B) (PubMed:29535189, PubMed:29547716). Interacts with WT1 (By similarity). Also a component of a MACOM-like complex, named WTAP complex, composed of WTAP, ZC3H13, CBLL1, VIRMA, RBM15, BCLAF1 and THRAP3 (By similarity). Interacts with CPNE4 (via VWFA domain) (PubMed:12522145).</text>
</comment>
<comment type="subcellular location">
    <subcellularLocation>
        <location evidence="1">Nucleus speckle</location>
    </subcellularLocation>
    <subcellularLocation>
        <location evidence="6">Nucleus</location>
        <location evidence="6">Nucleoplasm</location>
    </subcellularLocation>
    <subcellularLocation>
        <location evidence="6">Cytoplasm</location>
    </subcellularLocation>
    <text evidence="6">Mainly nuclear with some fraction located in the cytoplasm (PubMed:29547716). ZC3H13 is required to anchor component of the MACOM subcomplex, such as VIRMA, in the nucleus (PubMed:29547716).</text>
</comment>
<comment type="alternative products">
    <event type="alternative splicing"/>
    <isoform>
        <id>Q9ER69-1</id>
        <name>1</name>
        <sequence type="displayed"/>
    </isoform>
    <isoform>
        <id>Q9ER69-2</id>
        <name>2</name>
        <sequence type="described" ref="VSP_010280 VSP_010281"/>
    </isoform>
</comment>
<comment type="disruption phenotype">
    <text evidence="4">Death at E6.5 due to defects in cell proliferation.</text>
</comment>
<comment type="similarity">
    <text evidence="10">Belongs to the fl(2)d family.</text>
</comment>
<reference key="1">
    <citation type="journal article" date="2000" name="Hum. Mol. Genet.">
        <title>Identification of WTAP, a novel Wilms' tumour 1-associating protein.</title>
        <authorList>
            <person name="Little N.A."/>
            <person name="Hastie N.D."/>
            <person name="Davies R.C."/>
        </authorList>
    </citation>
    <scope>NUCLEOTIDE SEQUENCE [MRNA] OF 18-396 (ISOFORM 1)</scope>
</reference>
<reference key="2">
    <citation type="journal article" date="2005" name="Science">
        <title>The transcriptional landscape of the mammalian genome.</title>
        <authorList>
            <person name="Carninci P."/>
            <person name="Kasukawa T."/>
            <person name="Katayama S."/>
            <person name="Gough J."/>
            <person name="Frith M.C."/>
            <person name="Maeda N."/>
            <person name="Oyama R."/>
            <person name="Ravasi T."/>
            <person name="Lenhard B."/>
            <person name="Wells C."/>
            <person name="Kodzius R."/>
            <person name="Shimokawa K."/>
            <person name="Bajic V.B."/>
            <person name="Brenner S.E."/>
            <person name="Batalov S."/>
            <person name="Forrest A.R."/>
            <person name="Zavolan M."/>
            <person name="Davis M.J."/>
            <person name="Wilming L.G."/>
            <person name="Aidinis V."/>
            <person name="Allen J.E."/>
            <person name="Ambesi-Impiombato A."/>
            <person name="Apweiler R."/>
            <person name="Aturaliya R.N."/>
            <person name="Bailey T.L."/>
            <person name="Bansal M."/>
            <person name="Baxter L."/>
            <person name="Beisel K.W."/>
            <person name="Bersano T."/>
            <person name="Bono H."/>
            <person name="Chalk A.M."/>
            <person name="Chiu K.P."/>
            <person name="Choudhary V."/>
            <person name="Christoffels A."/>
            <person name="Clutterbuck D.R."/>
            <person name="Crowe M.L."/>
            <person name="Dalla E."/>
            <person name="Dalrymple B.P."/>
            <person name="de Bono B."/>
            <person name="Della Gatta G."/>
            <person name="di Bernardo D."/>
            <person name="Down T."/>
            <person name="Engstrom P."/>
            <person name="Fagiolini M."/>
            <person name="Faulkner G."/>
            <person name="Fletcher C.F."/>
            <person name="Fukushima T."/>
            <person name="Furuno M."/>
            <person name="Futaki S."/>
            <person name="Gariboldi M."/>
            <person name="Georgii-Hemming P."/>
            <person name="Gingeras T.R."/>
            <person name="Gojobori T."/>
            <person name="Green R.E."/>
            <person name="Gustincich S."/>
            <person name="Harbers M."/>
            <person name="Hayashi Y."/>
            <person name="Hensch T.K."/>
            <person name="Hirokawa N."/>
            <person name="Hill D."/>
            <person name="Huminiecki L."/>
            <person name="Iacono M."/>
            <person name="Ikeo K."/>
            <person name="Iwama A."/>
            <person name="Ishikawa T."/>
            <person name="Jakt M."/>
            <person name="Kanapin A."/>
            <person name="Katoh M."/>
            <person name="Kawasawa Y."/>
            <person name="Kelso J."/>
            <person name="Kitamura H."/>
            <person name="Kitano H."/>
            <person name="Kollias G."/>
            <person name="Krishnan S.P."/>
            <person name="Kruger A."/>
            <person name="Kummerfeld S.K."/>
            <person name="Kurochkin I.V."/>
            <person name="Lareau L.F."/>
            <person name="Lazarevic D."/>
            <person name="Lipovich L."/>
            <person name="Liu J."/>
            <person name="Liuni S."/>
            <person name="McWilliam S."/>
            <person name="Madan Babu M."/>
            <person name="Madera M."/>
            <person name="Marchionni L."/>
            <person name="Matsuda H."/>
            <person name="Matsuzawa S."/>
            <person name="Miki H."/>
            <person name="Mignone F."/>
            <person name="Miyake S."/>
            <person name="Morris K."/>
            <person name="Mottagui-Tabar S."/>
            <person name="Mulder N."/>
            <person name="Nakano N."/>
            <person name="Nakauchi H."/>
            <person name="Ng P."/>
            <person name="Nilsson R."/>
            <person name="Nishiguchi S."/>
            <person name="Nishikawa S."/>
            <person name="Nori F."/>
            <person name="Ohara O."/>
            <person name="Okazaki Y."/>
            <person name="Orlando V."/>
            <person name="Pang K.C."/>
            <person name="Pavan W.J."/>
            <person name="Pavesi G."/>
            <person name="Pesole G."/>
            <person name="Petrovsky N."/>
            <person name="Piazza S."/>
            <person name="Reed J."/>
            <person name="Reid J.F."/>
            <person name="Ring B.Z."/>
            <person name="Ringwald M."/>
            <person name="Rost B."/>
            <person name="Ruan Y."/>
            <person name="Salzberg S.L."/>
            <person name="Sandelin A."/>
            <person name="Schneider C."/>
            <person name="Schoenbach C."/>
            <person name="Sekiguchi K."/>
            <person name="Semple C.A."/>
            <person name="Seno S."/>
            <person name="Sessa L."/>
            <person name="Sheng Y."/>
            <person name="Shibata Y."/>
            <person name="Shimada H."/>
            <person name="Shimada K."/>
            <person name="Silva D."/>
            <person name="Sinclair B."/>
            <person name="Sperling S."/>
            <person name="Stupka E."/>
            <person name="Sugiura K."/>
            <person name="Sultana R."/>
            <person name="Takenaka Y."/>
            <person name="Taki K."/>
            <person name="Tammoja K."/>
            <person name="Tan S.L."/>
            <person name="Tang S."/>
            <person name="Taylor M.S."/>
            <person name="Tegner J."/>
            <person name="Teichmann S.A."/>
            <person name="Ueda H.R."/>
            <person name="van Nimwegen E."/>
            <person name="Verardo R."/>
            <person name="Wei C.L."/>
            <person name="Yagi K."/>
            <person name="Yamanishi H."/>
            <person name="Zabarovsky E."/>
            <person name="Zhu S."/>
            <person name="Zimmer A."/>
            <person name="Hide W."/>
            <person name="Bult C."/>
            <person name="Grimmond S.M."/>
            <person name="Teasdale R.D."/>
            <person name="Liu E.T."/>
            <person name="Brusic V."/>
            <person name="Quackenbush J."/>
            <person name="Wahlestedt C."/>
            <person name="Mattick J.S."/>
            <person name="Hume D.A."/>
            <person name="Kai C."/>
            <person name="Sasaki D."/>
            <person name="Tomaru Y."/>
            <person name="Fukuda S."/>
            <person name="Kanamori-Katayama M."/>
            <person name="Suzuki M."/>
            <person name="Aoki J."/>
            <person name="Arakawa T."/>
            <person name="Iida J."/>
            <person name="Imamura K."/>
            <person name="Itoh M."/>
            <person name="Kato T."/>
            <person name="Kawaji H."/>
            <person name="Kawagashira N."/>
            <person name="Kawashima T."/>
            <person name="Kojima M."/>
            <person name="Kondo S."/>
            <person name="Konno H."/>
            <person name="Nakano K."/>
            <person name="Ninomiya N."/>
            <person name="Nishio T."/>
            <person name="Okada M."/>
            <person name="Plessy C."/>
            <person name="Shibata K."/>
            <person name="Shiraki T."/>
            <person name="Suzuki S."/>
            <person name="Tagami M."/>
            <person name="Waki K."/>
            <person name="Watahiki A."/>
            <person name="Okamura-Oho Y."/>
            <person name="Suzuki H."/>
            <person name="Kawai J."/>
            <person name="Hayashizaki Y."/>
        </authorList>
    </citation>
    <scope>NUCLEOTIDE SEQUENCE [LARGE SCALE MRNA] (ISOFORMS 1 AND 2)</scope>
    <source>
        <strain>C57BL/6J</strain>
        <strain>NOD</strain>
        <tissue>Spleen</tissue>
    </source>
</reference>
<reference key="3">
    <citation type="journal article" date="2004" name="Genome Res.">
        <title>The status, quality, and expansion of the NIH full-length cDNA project: the Mammalian Gene Collection (MGC).</title>
        <authorList>
            <consortium name="The MGC Project Team"/>
        </authorList>
    </citation>
    <scope>NUCLEOTIDE SEQUENCE [LARGE SCALE MRNA] (ISOFORM 2)</scope>
    <source>
        <strain>Czech II</strain>
        <tissue>Eye</tissue>
        <tissue>Mammary tumor</tissue>
    </source>
</reference>
<reference key="4">
    <citation type="journal article" date="2003" name="J. Biol. Chem.">
        <title>Identification of targets for calcium signaling through the copine family of proteins. Characterization of a coiled-coil copine-binding motif.</title>
        <authorList>
            <person name="Tomsig J.L."/>
            <person name="Snyder S.L."/>
            <person name="Creutz C.E."/>
        </authorList>
    </citation>
    <scope>INTERACTION WITH CPNE4</scope>
</reference>
<reference key="5">
    <citation type="journal article" date="2006" name="Proc. Natl. Acad. Sci. U.S.A.">
        <title>Wilms' tumor 1-associating protein regulates G2/M transition through stabilization of cyclin A2 mRNA.</title>
        <authorList>
            <person name="Horiuchi K."/>
            <person name="Umetani M."/>
            <person name="Minami T."/>
            <person name="Okayama H."/>
            <person name="Takada S."/>
            <person name="Yamamoto M."/>
            <person name="Aburatani H."/>
            <person name="Reid P.C."/>
            <person name="Housman D.E."/>
            <person name="Hamakubo T."/>
            <person name="Kodama T."/>
        </authorList>
    </citation>
    <scope>DISRUPTION PHENOTYPE</scope>
</reference>
<reference key="6">
    <citation type="journal article" date="2010" name="Cell">
        <title>A tissue-specific atlas of mouse protein phosphorylation and expression.</title>
        <authorList>
            <person name="Huttlin E.L."/>
            <person name="Jedrychowski M.P."/>
            <person name="Elias J.E."/>
            <person name="Goswami T."/>
            <person name="Rad R."/>
            <person name="Beausoleil S.A."/>
            <person name="Villen J."/>
            <person name="Haas W."/>
            <person name="Sowa M.E."/>
            <person name="Gygi S.P."/>
        </authorList>
    </citation>
    <scope>PHOSPHORYLATION [LARGE SCALE ANALYSIS] AT SER-297; SER-341 AND THR-350</scope>
    <scope>IDENTIFICATION BY MASS SPECTROMETRY [LARGE SCALE ANALYSIS]</scope>
    <source>
        <tissue>Kidney</tissue>
        <tissue>Lung</tissue>
        <tissue>Spleen</tissue>
    </source>
</reference>
<reference key="7">
    <citation type="journal article" date="2018" name="Genes Dev.">
        <title>Zc3h13/Flacc is required for adenosine methylation by bridging the mRNA-binding factor Rbm15/Spenito to the m6A machinery component Wtap/Fl(2)d.</title>
        <authorList>
            <person name="Knuckles P."/>
            <person name="Lence T."/>
            <person name="Haussmann I.U."/>
            <person name="Jacob D."/>
            <person name="Kreim N."/>
            <person name="Carl S.H."/>
            <person name="Masiello I."/>
            <person name="Hares T."/>
            <person name="Villasenor R."/>
            <person name="Hess D."/>
            <person name="Andrade-Navarro M.A."/>
            <person name="Biggiogera M."/>
            <person name="Helm M."/>
            <person name="Soller M."/>
            <person name="Buehler M."/>
            <person name="Roignant J.Y."/>
        </authorList>
    </citation>
    <scope>FUNCTION</scope>
    <scope>IDENTIFICATION IN THE WMM COMPLEX</scope>
</reference>
<reference key="8">
    <citation type="journal article" date="2018" name="Mol. Cell">
        <title>Zc3h13 regulates nuclear RNA m6A methylation and mouse embryonic stem cell self-renewal.</title>
        <authorList>
            <person name="Wen J."/>
            <person name="Lv R."/>
            <person name="Ma H."/>
            <person name="Shen H."/>
            <person name="He C."/>
            <person name="Wang J."/>
            <person name="Jiao F."/>
            <person name="Liu H."/>
            <person name="Yang P."/>
            <person name="Tan L."/>
            <person name="Lan F."/>
            <person name="Shi Y.G."/>
            <person name="He C."/>
            <person name="Shi Y."/>
            <person name="Diao J."/>
        </authorList>
    </citation>
    <scope>FUNCTION</scope>
    <scope>IDENTIFICATION IN THE WMM COMPLEX</scope>
    <scope>SUBCELLULAR LOCATION</scope>
</reference>